<name>CY550_VIRHA</name>
<organism>
    <name type="scientific">Virgibacillus halodenitrificans</name>
    <name type="common">Bacillus halodenitrificans</name>
    <dbReference type="NCBI Taxonomy" id="1482"/>
    <lineage>
        <taxon>Bacteria</taxon>
        <taxon>Bacillati</taxon>
        <taxon>Bacillota</taxon>
        <taxon>Bacilli</taxon>
        <taxon>Bacillales</taxon>
        <taxon>Bacillaceae</taxon>
        <taxon>Virgibacillus</taxon>
    </lineage>
</organism>
<evidence type="ECO:0000255" key="1">
    <source>
        <dbReference type="PROSITE-ProRule" id="PRU00433"/>
    </source>
</evidence>
<accession>P80091</accession>
<proteinExistence type="evidence at protein level"/>
<reference key="1">
    <citation type="journal article" date="1992" name="Eur. J. Biochem.">
        <title>NMR and EPR studies on a monoheme cytochrome c550 isolated from Bacillus halodenitrificans.</title>
        <authorList>
            <person name="Saraiva L.M."/>
            <person name="Denariaz G."/>
            <person name="Liu M.-Y."/>
            <person name="Payne W.J."/>
            <person name="le Gall J."/>
            <person name="Moura I."/>
        </authorList>
    </citation>
    <scope>PROTEIN SEQUENCE</scope>
    <scope>STRUCTURE BY NMR</scope>
    <source>
        <strain>SP. NOV./ ATCC 49067</strain>
    </source>
</reference>
<dbReference type="PIR" id="S21191">
    <property type="entry name" value="S21191"/>
</dbReference>
<dbReference type="SMR" id="P80091"/>
<dbReference type="STRING" id="1482.BME96_13400"/>
<dbReference type="eggNOG" id="COG2010">
    <property type="taxonomic scope" value="Bacteria"/>
</dbReference>
<dbReference type="GO" id="GO:0009055">
    <property type="term" value="F:electron transfer activity"/>
    <property type="evidence" value="ECO:0007669"/>
    <property type="project" value="InterPro"/>
</dbReference>
<dbReference type="GO" id="GO:0020037">
    <property type="term" value="F:heme binding"/>
    <property type="evidence" value="ECO:0007669"/>
    <property type="project" value="InterPro"/>
</dbReference>
<dbReference type="GO" id="GO:0046872">
    <property type="term" value="F:metal ion binding"/>
    <property type="evidence" value="ECO:0007669"/>
    <property type="project" value="UniProtKB-KW"/>
</dbReference>
<dbReference type="Gene3D" id="1.10.760.10">
    <property type="entry name" value="Cytochrome c-like domain"/>
    <property type="match status" value="1"/>
</dbReference>
<dbReference type="InterPro" id="IPR009056">
    <property type="entry name" value="Cyt_c-like_dom"/>
</dbReference>
<dbReference type="InterPro" id="IPR036909">
    <property type="entry name" value="Cyt_c-like_dom_sf"/>
</dbReference>
<dbReference type="Pfam" id="PF00034">
    <property type="entry name" value="Cytochrom_C"/>
    <property type="match status" value="1"/>
</dbReference>
<dbReference type="SUPFAM" id="SSF46626">
    <property type="entry name" value="Cytochrome c"/>
    <property type="match status" value="1"/>
</dbReference>
<dbReference type="PROSITE" id="PS51007">
    <property type="entry name" value="CYTC"/>
    <property type="match status" value="1"/>
</dbReference>
<protein>
    <recommendedName>
        <fullName>Cytochrome c-550</fullName>
    </recommendedName>
    <alternativeName>
        <fullName>Cytochrome c550</fullName>
    </alternativeName>
</protein>
<sequence length="35" mass="3353">GGSVDSAAAEEVFESNCASCHGADLSGAGPDLTQV</sequence>
<keyword id="KW-0903">Direct protein sequencing</keyword>
<keyword id="KW-0249">Electron transport</keyword>
<keyword id="KW-0349">Heme</keyword>
<keyword id="KW-0408">Iron</keyword>
<keyword id="KW-0479">Metal-binding</keyword>
<keyword id="KW-0813">Transport</keyword>
<feature type="chain" id="PRO_0000108384" description="Cytochrome c-550">
    <location>
        <begin position="1"/>
        <end position="35" status="greater than"/>
    </location>
</feature>
<feature type="binding site" description="covalent" evidence="1">
    <location>
        <position position="17"/>
    </location>
    <ligand>
        <name>heme c</name>
        <dbReference type="ChEBI" id="CHEBI:61717"/>
    </ligand>
</feature>
<feature type="binding site" description="covalent" evidence="1">
    <location>
        <position position="20"/>
    </location>
    <ligand>
        <name>heme c</name>
        <dbReference type="ChEBI" id="CHEBI:61717"/>
    </ligand>
</feature>
<feature type="binding site" description="axial binding residue" evidence="1">
    <location>
        <position position="21"/>
    </location>
    <ligand>
        <name>heme c</name>
        <dbReference type="ChEBI" id="CHEBI:61717"/>
    </ligand>
    <ligandPart>
        <name>Fe</name>
        <dbReference type="ChEBI" id="CHEBI:18248"/>
    </ligandPart>
</feature>
<feature type="non-terminal residue">
    <location>
        <position position="35"/>
    </location>
</feature>
<comment type="function">
    <text>Monoheme cytochrome which functions as an electron carrier in the reduction of nitrite by membrane vesicles.</text>
</comment>
<comment type="PTM">
    <text>Binds 1 heme c group covalently per subunit.</text>
</comment>